<gene>
    <name type="primary">LTP2</name>
</gene>
<accession>O24038</accession>
<feature type="signal peptide" evidence="2">
    <location>
        <begin position="1"/>
        <end position="23"/>
    </location>
</feature>
<feature type="chain" id="PRO_0000252693" description="Non-specific lipid-transfer protein 2">
    <location>
        <begin position="24"/>
        <end position="114"/>
    </location>
</feature>
<feature type="disulfide bond" evidence="1">
    <location>
        <begin position="27"/>
        <end position="73"/>
    </location>
</feature>
<feature type="disulfide bond" evidence="1">
    <location>
        <begin position="37"/>
        <end position="50"/>
    </location>
</feature>
<feature type="disulfide bond" evidence="1">
    <location>
        <begin position="51"/>
        <end position="96"/>
    </location>
</feature>
<feature type="disulfide bond" evidence="1">
    <location>
        <begin position="71"/>
        <end position="110"/>
    </location>
</feature>
<protein>
    <recommendedName>
        <fullName>Non-specific lipid-transfer protein 2</fullName>
        <shortName>LTP 2</shortName>
    </recommendedName>
    <alternativeName>
        <fullName>LpLTP2</fullName>
    </alternativeName>
</protein>
<name>NLTP2_SOLPN</name>
<reference key="1">
    <citation type="submission" date="1996-08" db="EMBL/GenBank/DDBJ databases">
        <title>Developmental and drought-induced expression of members of the lipid transfer protein gene family in the drought tolerant tomato species Lycopersicon pennellii.</title>
        <authorList>
            <person name="Trevino M.B."/>
            <person name="O'Connell M.A."/>
        </authorList>
    </citation>
    <scope>NUCLEOTIDE SEQUENCE [GENOMIC DNA]</scope>
    <source>
        <strain>cv. LA716</strain>
    </source>
</reference>
<comment type="function">
    <text evidence="1">Plant non-specific lipid-transfer proteins transfer phospholipids as well as galactolipids across membranes. May play a role in wax or cutin deposition in the cell walls of expanding epidermal cells and certain secretory tissues (By similarity).</text>
</comment>
<comment type="similarity">
    <text evidence="3">Belongs to the plant LTP family.</text>
</comment>
<proteinExistence type="inferred from homology"/>
<organism>
    <name type="scientific">Solanum pennellii</name>
    <name type="common">Tomato</name>
    <name type="synonym">Lycopersicon pennellii</name>
    <dbReference type="NCBI Taxonomy" id="28526"/>
    <lineage>
        <taxon>Eukaryota</taxon>
        <taxon>Viridiplantae</taxon>
        <taxon>Streptophyta</taxon>
        <taxon>Embryophyta</taxon>
        <taxon>Tracheophyta</taxon>
        <taxon>Spermatophyta</taxon>
        <taxon>Magnoliopsida</taxon>
        <taxon>eudicotyledons</taxon>
        <taxon>Gunneridae</taxon>
        <taxon>Pentapetalae</taxon>
        <taxon>asterids</taxon>
        <taxon>lamiids</taxon>
        <taxon>Solanales</taxon>
        <taxon>Solanaceae</taxon>
        <taxon>Solanoideae</taxon>
        <taxon>Solaneae</taxon>
        <taxon>Solanum</taxon>
        <taxon>Solanum subgen. Lycopersicon</taxon>
    </lineage>
</organism>
<dbReference type="EMBL" id="U66466">
    <property type="protein sequence ID" value="AAB07487.1"/>
    <property type="molecule type" value="Genomic_DNA"/>
</dbReference>
<dbReference type="RefSeq" id="XP_015055662.1">
    <property type="nucleotide sequence ID" value="XM_015200176.1"/>
</dbReference>
<dbReference type="SMR" id="O24038"/>
<dbReference type="GeneID" id="107002238"/>
<dbReference type="KEGG" id="spen:107002238"/>
<dbReference type="Proteomes" id="UP000694930">
    <property type="component" value="Chromosome 10"/>
</dbReference>
<dbReference type="GO" id="GO:0008289">
    <property type="term" value="F:lipid binding"/>
    <property type="evidence" value="ECO:0007669"/>
    <property type="project" value="UniProtKB-KW"/>
</dbReference>
<dbReference type="GO" id="GO:0006869">
    <property type="term" value="P:lipid transport"/>
    <property type="evidence" value="ECO:0007669"/>
    <property type="project" value="InterPro"/>
</dbReference>
<dbReference type="CDD" id="cd01960">
    <property type="entry name" value="nsLTP1"/>
    <property type="match status" value="1"/>
</dbReference>
<dbReference type="Gene3D" id="1.10.110.10">
    <property type="entry name" value="Plant lipid-transfer and hydrophobic proteins"/>
    <property type="match status" value="1"/>
</dbReference>
<dbReference type="InterPro" id="IPR036312">
    <property type="entry name" value="Bifun_inhib/LTP/seed_sf"/>
</dbReference>
<dbReference type="InterPro" id="IPR016140">
    <property type="entry name" value="Bifunc_inhib/LTP/seed_store"/>
</dbReference>
<dbReference type="InterPro" id="IPR000528">
    <property type="entry name" value="Plant_nsLTP"/>
</dbReference>
<dbReference type="PANTHER" id="PTHR33076">
    <property type="entry name" value="NON-SPECIFIC LIPID-TRANSFER PROTEIN 2-RELATED"/>
    <property type="match status" value="1"/>
</dbReference>
<dbReference type="Pfam" id="PF00234">
    <property type="entry name" value="Tryp_alpha_amyl"/>
    <property type="match status" value="1"/>
</dbReference>
<dbReference type="PRINTS" id="PR00382">
    <property type="entry name" value="LIPIDTRNSFER"/>
</dbReference>
<dbReference type="SMART" id="SM00499">
    <property type="entry name" value="AAI"/>
    <property type="match status" value="1"/>
</dbReference>
<dbReference type="SUPFAM" id="SSF47699">
    <property type="entry name" value="Bifunctional inhibitor/lipid-transfer protein/seed storage 2S albumin"/>
    <property type="match status" value="1"/>
</dbReference>
<dbReference type="PROSITE" id="PS00597">
    <property type="entry name" value="PLANT_LTP"/>
    <property type="match status" value="1"/>
</dbReference>
<keyword id="KW-1015">Disulfide bond</keyword>
<keyword id="KW-0446">Lipid-binding</keyword>
<keyword id="KW-0732">Signal</keyword>
<keyword id="KW-0813">Transport</keyword>
<sequence>MEMVNKIACFVLLCMVVVAPHAEALTCGQVTSTLAPCLPYLMNRGPLGGCCGGVKGLLGQAQTTVDRQTACTCLKSAASSFTGLDLGKAASLPSTCSVNIPYKISPSTDCSKVQ</sequence>
<evidence type="ECO:0000250" key="1"/>
<evidence type="ECO:0000255" key="2"/>
<evidence type="ECO:0000305" key="3"/>